<accession>P10367</accession>
<comment type="catalytic activity">
    <reaction>
        <text>1-(5-phospho-beta-D-ribosyl)-ATP + H2O = 1-(5-phospho-beta-D-ribosyl)-5'-AMP + diphosphate + H(+)</text>
        <dbReference type="Rhea" id="RHEA:22828"/>
        <dbReference type="ChEBI" id="CHEBI:15377"/>
        <dbReference type="ChEBI" id="CHEBI:15378"/>
        <dbReference type="ChEBI" id="CHEBI:33019"/>
        <dbReference type="ChEBI" id="CHEBI:59457"/>
        <dbReference type="ChEBI" id="CHEBI:73183"/>
        <dbReference type="EC" id="3.6.1.31"/>
    </reaction>
</comment>
<comment type="catalytic activity">
    <reaction>
        <text>1-(5-phospho-beta-D-ribosyl)-5'-AMP + H2O = 1-(5-phospho-beta-D-ribosyl)-5-[(5-phospho-beta-D-ribosylamino)methylideneamino]imidazole-4-carboxamide</text>
        <dbReference type="Rhea" id="RHEA:20049"/>
        <dbReference type="ChEBI" id="CHEBI:15377"/>
        <dbReference type="ChEBI" id="CHEBI:58435"/>
        <dbReference type="ChEBI" id="CHEBI:59457"/>
        <dbReference type="EC" id="3.5.4.19"/>
    </reaction>
</comment>
<comment type="pathway">
    <text>Amino-acid biosynthesis; L-histidine biosynthesis; L-histidine from 5-phospho-alpha-D-ribose 1-diphosphate: step 2/9.</text>
</comment>
<comment type="pathway">
    <text>Amino-acid biosynthesis; L-histidine biosynthesis; L-histidine from 5-phospho-alpha-D-ribose 1-diphosphate: step 3/9.</text>
</comment>
<comment type="subcellular location">
    <subcellularLocation>
        <location>Cytoplasm</location>
    </subcellularLocation>
</comment>
<comment type="similarity">
    <text evidence="1">In the N-terminal section; belongs to the PRA-CH family.</text>
</comment>
<comment type="similarity">
    <text evidence="1">In the C-terminal section; belongs to the PRA-PH family.</text>
</comment>
<proteinExistence type="inferred from homology"/>
<feature type="chain" id="PRO_0000136427" description="Histidine biosynthesis bifunctional protein HisIE">
    <location>
        <begin position="1"/>
        <end position="203"/>
    </location>
</feature>
<feature type="region of interest" description="Phosphoribosyl-AMP cyclohydrolase">
    <location>
        <begin position="1"/>
        <end position="114"/>
    </location>
</feature>
<feature type="region of interest" description="Phosphoribosyl-ATP pyrophosphohydrolase">
    <location>
        <begin position="115"/>
        <end position="203"/>
    </location>
</feature>
<feature type="sequence conflict" description="In Ref. 1 and 2." evidence="1" ref="1 2">
    <original>H</original>
    <variation>L</variation>
    <location>
        <position position="70"/>
    </location>
</feature>
<feature type="sequence conflict" description="In Ref. 1 and 2." evidence="1" ref="1 2">
    <original>N</original>
    <variation>K</variation>
    <location>
        <position position="91"/>
    </location>
</feature>
<evidence type="ECO:0000305" key="1"/>
<protein>
    <recommendedName>
        <fullName>Histidine biosynthesis bifunctional protein HisIE</fullName>
    </recommendedName>
    <domain>
        <recommendedName>
            <fullName>Phosphoribosyl-AMP cyclohydrolase</fullName>
            <shortName>PRA-CH</shortName>
            <ecNumber>3.5.4.19</ecNumber>
        </recommendedName>
    </domain>
    <domain>
        <recommendedName>
            <fullName>Phosphoribosyl-ATP pyrophosphatase</fullName>
            <shortName>PRA-PH</shortName>
            <ecNumber>3.6.1.31</ecNumber>
        </recommendedName>
    </domain>
</protein>
<gene>
    <name type="primary">hisI</name>
    <name type="synonym">hisIE</name>
    <name type="ordered locus">STM2078</name>
</gene>
<reference key="1">
    <citation type="journal article" date="1988" name="J. Mol. Biol.">
        <title>Structure and function of the Salmonella typhimurium and Escherichia coli K-12 histidine operons.</title>
        <authorList>
            <person name="Carlomagno M.S."/>
            <person name="Chiariotti L."/>
            <person name="Alifano P."/>
            <person name="Nappo A.G."/>
            <person name="Bruni C.B."/>
        </authorList>
    </citation>
    <scope>NUCLEOTIDE SEQUENCE [GENOMIC DNA]</scope>
    <source>
        <strain>LT2</strain>
    </source>
</reference>
<reference key="2">
    <citation type="journal article" date="1986" name="Mol. Gen. Genet.">
        <title>Nucleotide sequence of the Escherichia coli hisD gene and of the Escherichia coli and Salmonella typhimurium hisIE region.</title>
        <authorList>
            <person name="Chiariotti L."/>
            <person name="Alifano P."/>
            <person name="Carlomagno M.S."/>
            <person name="Bruni C.B."/>
        </authorList>
    </citation>
    <scope>NUCLEOTIDE SEQUENCE [GENOMIC DNA]</scope>
    <source>
        <strain>LT2</strain>
    </source>
</reference>
<reference key="3">
    <citation type="journal article" date="2001" name="Nature">
        <title>Complete genome sequence of Salmonella enterica serovar Typhimurium LT2.</title>
        <authorList>
            <person name="McClelland M."/>
            <person name="Sanderson K.E."/>
            <person name="Spieth J."/>
            <person name="Clifton S.W."/>
            <person name="Latreille P."/>
            <person name="Courtney L."/>
            <person name="Porwollik S."/>
            <person name="Ali J."/>
            <person name="Dante M."/>
            <person name="Du F."/>
            <person name="Hou S."/>
            <person name="Layman D."/>
            <person name="Leonard S."/>
            <person name="Nguyen C."/>
            <person name="Scott K."/>
            <person name="Holmes A."/>
            <person name="Grewal N."/>
            <person name="Mulvaney E."/>
            <person name="Ryan E."/>
            <person name="Sun H."/>
            <person name="Florea L."/>
            <person name="Miller W."/>
            <person name="Stoneking T."/>
            <person name="Nhan M."/>
            <person name="Waterston R."/>
            <person name="Wilson R.K."/>
        </authorList>
    </citation>
    <scope>NUCLEOTIDE SEQUENCE [LARGE SCALE GENOMIC DNA]</scope>
    <source>
        <strain>LT2 / SGSC1412 / ATCC 700720</strain>
    </source>
</reference>
<organism>
    <name type="scientific">Salmonella typhimurium (strain LT2 / SGSC1412 / ATCC 700720)</name>
    <dbReference type="NCBI Taxonomy" id="99287"/>
    <lineage>
        <taxon>Bacteria</taxon>
        <taxon>Pseudomonadati</taxon>
        <taxon>Pseudomonadota</taxon>
        <taxon>Gammaproteobacteria</taxon>
        <taxon>Enterobacterales</taxon>
        <taxon>Enterobacteriaceae</taxon>
        <taxon>Salmonella</taxon>
    </lineage>
</organism>
<dbReference type="EC" id="3.5.4.19"/>
<dbReference type="EC" id="3.6.1.31"/>
<dbReference type="EMBL" id="X13464">
    <property type="protein sequence ID" value="CAA31829.1"/>
    <property type="molecule type" value="Genomic_DNA"/>
</dbReference>
<dbReference type="EMBL" id="X03975">
    <property type="protein sequence ID" value="CAA27614.1"/>
    <property type="molecule type" value="Genomic_DNA"/>
</dbReference>
<dbReference type="EMBL" id="AE006468">
    <property type="protein sequence ID" value="AAL20982.1"/>
    <property type="molecule type" value="Genomic_DNA"/>
</dbReference>
<dbReference type="PIR" id="B26022">
    <property type="entry name" value="YNEBHI"/>
</dbReference>
<dbReference type="RefSeq" id="NP_461023.1">
    <property type="nucleotide sequence ID" value="NC_003197.2"/>
</dbReference>
<dbReference type="RefSeq" id="WP_000954848.1">
    <property type="nucleotide sequence ID" value="NC_003197.2"/>
</dbReference>
<dbReference type="SMR" id="P10367"/>
<dbReference type="STRING" id="99287.STM2078"/>
<dbReference type="PaxDb" id="99287-STM2078"/>
<dbReference type="GeneID" id="1253599"/>
<dbReference type="KEGG" id="stm:STM2078"/>
<dbReference type="PATRIC" id="fig|99287.12.peg.2200"/>
<dbReference type="HOGENOM" id="CLU_048577_3_1_6"/>
<dbReference type="OMA" id="ERSCFHQ"/>
<dbReference type="PhylomeDB" id="P10367"/>
<dbReference type="BioCyc" id="SENT99287:STM2078-MONOMER"/>
<dbReference type="UniPathway" id="UPA00031">
    <property type="reaction ID" value="UER00007"/>
</dbReference>
<dbReference type="UniPathway" id="UPA00031">
    <property type="reaction ID" value="UER00008"/>
</dbReference>
<dbReference type="Proteomes" id="UP000001014">
    <property type="component" value="Chromosome"/>
</dbReference>
<dbReference type="GO" id="GO:0005737">
    <property type="term" value="C:cytoplasm"/>
    <property type="evidence" value="ECO:0007669"/>
    <property type="project" value="UniProtKB-SubCell"/>
</dbReference>
<dbReference type="GO" id="GO:0005524">
    <property type="term" value="F:ATP binding"/>
    <property type="evidence" value="ECO:0007669"/>
    <property type="project" value="UniProtKB-KW"/>
</dbReference>
<dbReference type="GO" id="GO:0004635">
    <property type="term" value="F:phosphoribosyl-AMP cyclohydrolase activity"/>
    <property type="evidence" value="ECO:0007669"/>
    <property type="project" value="UniProtKB-UniRule"/>
</dbReference>
<dbReference type="GO" id="GO:0004636">
    <property type="term" value="F:phosphoribosyl-ATP diphosphatase activity"/>
    <property type="evidence" value="ECO:0007669"/>
    <property type="project" value="UniProtKB-UniRule"/>
</dbReference>
<dbReference type="GO" id="GO:0000105">
    <property type="term" value="P:L-histidine biosynthetic process"/>
    <property type="evidence" value="ECO:0007669"/>
    <property type="project" value="UniProtKB-UniRule"/>
</dbReference>
<dbReference type="CDD" id="cd11534">
    <property type="entry name" value="NTP-PPase_HisIE_like"/>
    <property type="match status" value="1"/>
</dbReference>
<dbReference type="FunFam" id="1.10.287.1080:FF:000002">
    <property type="entry name" value="Histidine biosynthesis bifunctional protein HisIE"/>
    <property type="match status" value="1"/>
</dbReference>
<dbReference type="FunFam" id="3.10.20.810:FF:000001">
    <property type="entry name" value="Histidine biosynthesis bifunctional protein HisIE"/>
    <property type="match status" value="1"/>
</dbReference>
<dbReference type="Gene3D" id="1.10.287.1080">
    <property type="entry name" value="MazG-like"/>
    <property type="match status" value="1"/>
</dbReference>
<dbReference type="Gene3D" id="3.10.20.810">
    <property type="entry name" value="Phosphoribosyl-AMP cyclohydrolase"/>
    <property type="match status" value="1"/>
</dbReference>
<dbReference type="HAMAP" id="MF_01020">
    <property type="entry name" value="HisE"/>
    <property type="match status" value="1"/>
</dbReference>
<dbReference type="HAMAP" id="MF_01019">
    <property type="entry name" value="HisIE"/>
    <property type="match status" value="1"/>
</dbReference>
<dbReference type="InterPro" id="IPR023019">
    <property type="entry name" value="His_synth_HisIE"/>
</dbReference>
<dbReference type="InterPro" id="IPR008179">
    <property type="entry name" value="HisE"/>
</dbReference>
<dbReference type="InterPro" id="IPR021130">
    <property type="entry name" value="PRib-ATP_PPHydrolase-like"/>
</dbReference>
<dbReference type="InterPro" id="IPR002496">
    <property type="entry name" value="PRib_AMP_CycHydrolase_dom"/>
</dbReference>
<dbReference type="InterPro" id="IPR038019">
    <property type="entry name" value="PRib_AMP_CycHydrolase_sf"/>
</dbReference>
<dbReference type="NCBIfam" id="TIGR03188">
    <property type="entry name" value="histidine_hisI"/>
    <property type="match status" value="1"/>
</dbReference>
<dbReference type="NCBIfam" id="NF000768">
    <property type="entry name" value="PRK00051.1"/>
    <property type="match status" value="1"/>
</dbReference>
<dbReference type="NCBIfam" id="NF002747">
    <property type="entry name" value="PRK02759.1"/>
    <property type="match status" value="1"/>
</dbReference>
<dbReference type="PANTHER" id="PTHR42945">
    <property type="entry name" value="HISTIDINE BIOSYNTHESIS BIFUNCTIONAL PROTEIN"/>
    <property type="match status" value="1"/>
</dbReference>
<dbReference type="PANTHER" id="PTHR42945:SF9">
    <property type="entry name" value="HISTIDINE BIOSYNTHESIS BIFUNCTIONAL PROTEIN HISIE"/>
    <property type="match status" value="1"/>
</dbReference>
<dbReference type="Pfam" id="PF01502">
    <property type="entry name" value="PRA-CH"/>
    <property type="match status" value="1"/>
</dbReference>
<dbReference type="Pfam" id="PF01503">
    <property type="entry name" value="PRA-PH"/>
    <property type="match status" value="1"/>
</dbReference>
<dbReference type="SUPFAM" id="SSF101386">
    <property type="entry name" value="all-alpha NTP pyrophosphatases"/>
    <property type="match status" value="1"/>
</dbReference>
<dbReference type="SUPFAM" id="SSF141734">
    <property type="entry name" value="HisI-like"/>
    <property type="match status" value="1"/>
</dbReference>
<sequence>MLTEQQRRELDWEKTDGLMPAIVQHAVSGEVLMLGYMNPQALDKTIESGHVTFFSRTKQRLWTKGETSGHVLNVVSIAPDCDNDTLLVLANPVGPTCHKGTSSCFGDASHQWLFLYQLEQLLAERKTADPTSSYTAKLYASGTKRIAQKVGEEGVETALAATVNDRFELTNEASDLMYHLLVLLQDQDLNLTTVIDNLRKRHQ</sequence>
<name>HIS2_SALTY</name>
<keyword id="KW-0028">Amino-acid biosynthesis</keyword>
<keyword id="KW-0067">ATP-binding</keyword>
<keyword id="KW-0963">Cytoplasm</keyword>
<keyword id="KW-0368">Histidine biosynthesis</keyword>
<keyword id="KW-0378">Hydrolase</keyword>
<keyword id="KW-0511">Multifunctional enzyme</keyword>
<keyword id="KW-0547">Nucleotide-binding</keyword>
<keyword id="KW-1185">Reference proteome</keyword>